<dbReference type="EC" id="3.6.1.9" evidence="1"/>
<dbReference type="EMBL" id="CP000148">
    <property type="protein sequence ID" value="ABB31137.1"/>
    <property type="molecule type" value="Genomic_DNA"/>
</dbReference>
<dbReference type="RefSeq" id="WP_004513042.1">
    <property type="nucleotide sequence ID" value="NC_007517.1"/>
</dbReference>
<dbReference type="SMR" id="Q39X87"/>
<dbReference type="STRING" id="269799.Gmet_0895"/>
<dbReference type="KEGG" id="gme:Gmet_0895"/>
<dbReference type="eggNOG" id="COG0424">
    <property type="taxonomic scope" value="Bacteria"/>
</dbReference>
<dbReference type="HOGENOM" id="CLU_040416_2_1_7"/>
<dbReference type="Proteomes" id="UP000007073">
    <property type="component" value="Chromosome"/>
</dbReference>
<dbReference type="GO" id="GO:0005737">
    <property type="term" value="C:cytoplasm"/>
    <property type="evidence" value="ECO:0007669"/>
    <property type="project" value="UniProtKB-SubCell"/>
</dbReference>
<dbReference type="GO" id="GO:0036218">
    <property type="term" value="F:dTTP diphosphatase activity"/>
    <property type="evidence" value="ECO:0007669"/>
    <property type="project" value="RHEA"/>
</dbReference>
<dbReference type="GO" id="GO:0036221">
    <property type="term" value="F:UTP diphosphatase activity"/>
    <property type="evidence" value="ECO:0007669"/>
    <property type="project" value="RHEA"/>
</dbReference>
<dbReference type="GO" id="GO:0009117">
    <property type="term" value="P:nucleotide metabolic process"/>
    <property type="evidence" value="ECO:0007669"/>
    <property type="project" value="UniProtKB-KW"/>
</dbReference>
<dbReference type="CDD" id="cd00555">
    <property type="entry name" value="Maf"/>
    <property type="match status" value="1"/>
</dbReference>
<dbReference type="Gene3D" id="3.90.950.10">
    <property type="match status" value="1"/>
</dbReference>
<dbReference type="HAMAP" id="MF_00528">
    <property type="entry name" value="Maf"/>
    <property type="match status" value="1"/>
</dbReference>
<dbReference type="InterPro" id="IPR029001">
    <property type="entry name" value="ITPase-like_fam"/>
</dbReference>
<dbReference type="InterPro" id="IPR003697">
    <property type="entry name" value="Maf-like"/>
</dbReference>
<dbReference type="NCBIfam" id="TIGR00172">
    <property type="entry name" value="maf"/>
    <property type="match status" value="1"/>
</dbReference>
<dbReference type="NCBIfam" id="NF010948">
    <property type="entry name" value="PRK14368.1"/>
    <property type="match status" value="1"/>
</dbReference>
<dbReference type="PANTHER" id="PTHR43213">
    <property type="entry name" value="BIFUNCTIONAL DTTP/UTP PYROPHOSPHATASE/METHYLTRANSFERASE PROTEIN-RELATED"/>
    <property type="match status" value="1"/>
</dbReference>
<dbReference type="PANTHER" id="PTHR43213:SF5">
    <property type="entry name" value="BIFUNCTIONAL DTTP_UTP PYROPHOSPHATASE_METHYLTRANSFERASE PROTEIN-RELATED"/>
    <property type="match status" value="1"/>
</dbReference>
<dbReference type="Pfam" id="PF02545">
    <property type="entry name" value="Maf"/>
    <property type="match status" value="1"/>
</dbReference>
<dbReference type="PIRSF" id="PIRSF006305">
    <property type="entry name" value="Maf"/>
    <property type="match status" value="1"/>
</dbReference>
<dbReference type="SUPFAM" id="SSF52972">
    <property type="entry name" value="ITPase-like"/>
    <property type="match status" value="1"/>
</dbReference>
<proteinExistence type="inferred from homology"/>
<keyword id="KW-0963">Cytoplasm</keyword>
<keyword id="KW-0378">Hydrolase</keyword>
<keyword id="KW-0546">Nucleotide metabolism</keyword>
<keyword id="KW-1185">Reference proteome</keyword>
<gene>
    <name type="ordered locus">Gmet_0895</name>
</gene>
<comment type="function">
    <text evidence="1">Nucleoside triphosphate pyrophosphatase that hydrolyzes dTTP and UTP. May have a dual role in cell division arrest and in preventing the incorporation of modified nucleotides into cellular nucleic acids.</text>
</comment>
<comment type="catalytic activity">
    <reaction evidence="1">
        <text>dTTP + H2O = dTMP + diphosphate + H(+)</text>
        <dbReference type="Rhea" id="RHEA:28534"/>
        <dbReference type="ChEBI" id="CHEBI:15377"/>
        <dbReference type="ChEBI" id="CHEBI:15378"/>
        <dbReference type="ChEBI" id="CHEBI:33019"/>
        <dbReference type="ChEBI" id="CHEBI:37568"/>
        <dbReference type="ChEBI" id="CHEBI:63528"/>
        <dbReference type="EC" id="3.6.1.9"/>
    </reaction>
</comment>
<comment type="catalytic activity">
    <reaction evidence="1">
        <text>UTP + H2O = UMP + diphosphate + H(+)</text>
        <dbReference type="Rhea" id="RHEA:29395"/>
        <dbReference type="ChEBI" id="CHEBI:15377"/>
        <dbReference type="ChEBI" id="CHEBI:15378"/>
        <dbReference type="ChEBI" id="CHEBI:33019"/>
        <dbReference type="ChEBI" id="CHEBI:46398"/>
        <dbReference type="ChEBI" id="CHEBI:57865"/>
        <dbReference type="EC" id="3.6.1.9"/>
    </reaction>
</comment>
<comment type="cofactor">
    <cofactor evidence="1">
        <name>a divalent metal cation</name>
        <dbReference type="ChEBI" id="CHEBI:60240"/>
    </cofactor>
</comment>
<comment type="subcellular location">
    <subcellularLocation>
        <location evidence="1">Cytoplasm</location>
    </subcellularLocation>
</comment>
<comment type="similarity">
    <text evidence="1">Belongs to the Maf family. YhdE subfamily.</text>
</comment>
<reference key="1">
    <citation type="journal article" date="2009" name="BMC Microbiol.">
        <title>The genome sequence of Geobacter metallireducens: features of metabolism, physiology and regulation common and dissimilar to Geobacter sulfurreducens.</title>
        <authorList>
            <person name="Aklujkar M."/>
            <person name="Krushkal J."/>
            <person name="DiBartolo G."/>
            <person name="Lapidus A."/>
            <person name="Land M.L."/>
            <person name="Lovley D.R."/>
        </authorList>
    </citation>
    <scope>NUCLEOTIDE SEQUENCE [LARGE SCALE GENOMIC DNA]</scope>
    <source>
        <strain>ATCC 53774 / DSM 7210 / GS-15</strain>
    </source>
</reference>
<organism>
    <name type="scientific">Geobacter metallireducens (strain ATCC 53774 / DSM 7210 / GS-15)</name>
    <dbReference type="NCBI Taxonomy" id="269799"/>
    <lineage>
        <taxon>Bacteria</taxon>
        <taxon>Pseudomonadati</taxon>
        <taxon>Thermodesulfobacteriota</taxon>
        <taxon>Desulfuromonadia</taxon>
        <taxon>Geobacterales</taxon>
        <taxon>Geobacteraceae</taxon>
        <taxon>Geobacter</taxon>
    </lineage>
</organism>
<evidence type="ECO:0000255" key="1">
    <source>
        <dbReference type="HAMAP-Rule" id="MF_00528"/>
    </source>
</evidence>
<name>NTPPA_GEOMG</name>
<feature type="chain" id="PRO_0000267312" description="dTTP/UTP pyrophosphatase">
    <location>
        <begin position="1"/>
        <end position="192"/>
    </location>
</feature>
<feature type="active site" description="Proton acceptor" evidence="1">
    <location>
        <position position="72"/>
    </location>
</feature>
<feature type="site" description="Important for substrate specificity" evidence="1">
    <location>
        <position position="15"/>
    </location>
</feature>
<feature type="site" description="Important for substrate specificity" evidence="1">
    <location>
        <position position="73"/>
    </location>
</feature>
<feature type="site" description="Important for substrate specificity" evidence="1">
    <location>
        <position position="157"/>
    </location>
</feature>
<accession>Q39X87</accession>
<protein>
    <recommendedName>
        <fullName evidence="1">dTTP/UTP pyrophosphatase</fullName>
        <shortName evidence="1">dTTPase/UTPase</shortName>
        <ecNumber evidence="1">3.6.1.9</ecNumber>
    </recommendedName>
    <alternativeName>
        <fullName evidence="1">Nucleoside triphosphate pyrophosphatase</fullName>
    </alternativeName>
    <alternativeName>
        <fullName evidence="1">Nucleotide pyrophosphatase</fullName>
        <shortName evidence="1">Nucleotide PPase</shortName>
    </alternativeName>
</protein>
<sequence length="192" mass="20395">MPENSRIVLASASPRRLELLASAGIEFDVFASDIPEEPIPGEAPADFSVRLAKDKAVATAARSEGRWFIGADTIVVCDGEIMGKPADGADAVRMLKKLSGVPHEVITGYAIYDKARDGILCKAVVTKVFFKPLRDEEITAYVATGCPMDKAGAYAIQGGAACMVERIDGSYTNVVGLPLCEVVEDLRTMGAL</sequence>